<sequence>MTGKDGAVLSESLNKSKSLCATENGGNNNPHLSKSSITHPPKCTGFGIQEILGLNKEPSSAPRSTLDSFPAGAHLLASRSMLGPAGVGVGVGMGLIGPGGIPSFYSQPAFLEVLSDAQNVHLQPLSRTVGPLEHNQSASSDSDDVSSSERKMSKSSLSQSKKRKKRRHRTIFTSYQLEELEKAFNEAHYPDVYAREMLAMKTELPEDRIQVWFQNRRAKWRKREKCWGRSSVMAEYGLYGAMVRHSIPLPVQDGFPTTSCFSKHEYPPFFAESILKSAKDGIMDSCAPWLLGMHKKSLETAGHQSNEKSDVTQTPTNPKPDEAEAEERRTESPMSKEELRENSIAALRAKAQEHSAKVLGTVSSERLEHNMETTATEEKSSEQIDAKEEEKSS</sequence>
<protein>
    <recommendedName>
        <fullName>Visual system homeobox 2</fullName>
    </recommendedName>
    <alternativeName>
        <fullName>Ceh-10 homeodomain-containing homolog</fullName>
    </alternativeName>
    <alternativeName>
        <fullName>Homeobox protein ALX</fullName>
    </alternativeName>
    <alternativeName>
        <fullName>Homeobox protein CHX10</fullName>
    </alternativeName>
    <alternativeName>
        <fullName>Transcription factor VSX2</fullName>
    </alternativeName>
</protein>
<keyword id="KW-0010">Activator</keyword>
<keyword id="KW-0025">Alternative splicing</keyword>
<keyword id="KW-0217">Developmental protein</keyword>
<keyword id="KW-0238">DNA-binding</keyword>
<keyword id="KW-0371">Homeobox</keyword>
<keyword id="KW-0539">Nucleus</keyword>
<keyword id="KW-1185">Reference proteome</keyword>
<keyword id="KW-0678">Repressor</keyword>
<keyword id="KW-0716">Sensory transduction</keyword>
<keyword id="KW-0804">Transcription</keyword>
<keyword id="KW-0805">Transcription regulation</keyword>
<keyword id="KW-0844">Vision</keyword>
<proteinExistence type="evidence at transcript level"/>
<comment type="function">
    <text evidence="1 7 8">Acts as a transcriptional regulator (By similarity). Mediates the differentiation of V2a interneurons (By similarity). Plays a role in eye development and organization of the neuroretina (PubMed:17919464, PubMed:9203137).</text>
</comment>
<comment type="subcellular location">
    <subcellularLocation>
        <location evidence="1">Nucleus</location>
    </subcellularLocation>
</comment>
<comment type="alternative products">
    <event type="alternative splicing"/>
    <isoform>
        <id>O42477-1</id>
        <name>1</name>
        <sequence type="displayed"/>
    </isoform>
    <isoform>
        <id>O42477-2</id>
        <name>2</name>
        <sequence type="described" ref="VSP_002304"/>
    </isoform>
</comment>
<comment type="developmental stage">
    <text evidence="8">Expressed 12 hours post-fertilization (hpf), concomitantly with the appearance of the optic vesicles. At 18-20 hpf expressed in presumptive neural retina. At 24 hpf when the lens are formed, expression in the eye is restricted to the neural retina. At 48 hpf, after completion of the retinal differentiation, expression is restricted to the germinal cells at the margin of the retina and to paired parasagittal locations in the dorsal mesencephalon and rhombencephalon.</text>
</comment>
<comment type="disruption phenotype">
    <text evidence="7">Morpholino knockdown causes a decrease in eye size and an increase in expression of vsx1 and ccnd1 at 24 hours post-fertilization.</text>
</comment>
<comment type="similarity">
    <text evidence="11">Belongs to the paired homeobox family.</text>
</comment>
<comment type="sequence caution" evidence="11">
    <conflict type="frameshift">
        <sequence resource="EMBL-CDS" id="AAB66714"/>
    </conflict>
</comment>
<feature type="chain" id="PRO_0000049360" description="Visual system homeobox 2">
    <location>
        <begin position="1"/>
        <end position="393"/>
    </location>
</feature>
<feature type="domain" description="CVC" evidence="5">
    <location>
        <begin position="225"/>
        <end position="299"/>
    </location>
</feature>
<feature type="DNA-binding region" description="Homeobox" evidence="3">
    <location>
        <begin position="165"/>
        <end position="224"/>
    </location>
</feature>
<feature type="region of interest" description="Disordered" evidence="6">
    <location>
        <begin position="18"/>
        <end position="41"/>
    </location>
</feature>
<feature type="region of interest" description="Disordered" evidence="6">
    <location>
        <begin position="128"/>
        <end position="168"/>
    </location>
</feature>
<feature type="region of interest" description="Disordered" evidence="6">
    <location>
        <begin position="300"/>
        <end position="393"/>
    </location>
</feature>
<feature type="short sequence motif" description="Octapeptide motif">
    <location>
        <begin position="46"/>
        <end position="53"/>
    </location>
</feature>
<feature type="short sequence motif" description="Nuclear localization signal" evidence="2">
    <location>
        <begin position="150"/>
        <end position="154"/>
    </location>
</feature>
<feature type="short sequence motif" description="OAR" evidence="4">
    <location>
        <begin position="342"/>
        <end position="355"/>
    </location>
</feature>
<feature type="compositionally biased region" description="Polar residues" evidence="6">
    <location>
        <begin position="18"/>
        <end position="38"/>
    </location>
</feature>
<feature type="compositionally biased region" description="Basic and acidic residues" evidence="6">
    <location>
        <begin position="319"/>
        <end position="341"/>
    </location>
</feature>
<feature type="compositionally biased region" description="Basic and acidic residues" evidence="6">
    <location>
        <begin position="365"/>
        <end position="393"/>
    </location>
</feature>
<feature type="splice variant" id="VSP_002304" description="In isoform 2." evidence="9 10">
    <location>
        <begin position="251"/>
        <end position="271"/>
    </location>
</feature>
<feature type="sequence conflict" description="In Ref. 1; AAB66714." evidence="11" ref="1">
    <original>E</original>
    <variation>EATE</variation>
    <location>
        <position position="23"/>
    </location>
</feature>
<feature type="sequence conflict" description="In Ref. 2; AAH67664." evidence="11" ref="2">
    <original>P</original>
    <variation>Q</variation>
    <location>
        <position position="40"/>
    </location>
</feature>
<feature type="sequence conflict" description="In Ref. 1; AAB66714." evidence="11" ref="1">
    <original>P</original>
    <variation>A</variation>
    <location>
        <position position="84"/>
    </location>
</feature>
<feature type="sequence conflict" description="In Ref. 1; AAB66714." evidence="11" ref="1">
    <original>Q</original>
    <variation>E</variation>
    <location>
        <position position="176"/>
    </location>
</feature>
<evidence type="ECO:0000250" key="1">
    <source>
        <dbReference type="UniProtKB" id="Q61412"/>
    </source>
</evidence>
<evidence type="ECO:0000255" key="2"/>
<evidence type="ECO:0000255" key="3">
    <source>
        <dbReference type="PROSITE-ProRule" id="PRU00108"/>
    </source>
</evidence>
<evidence type="ECO:0000255" key="4">
    <source>
        <dbReference type="PROSITE-ProRule" id="PRU00138"/>
    </source>
</evidence>
<evidence type="ECO:0000255" key="5">
    <source>
        <dbReference type="PROSITE-ProRule" id="PRU00829"/>
    </source>
</evidence>
<evidence type="ECO:0000256" key="6">
    <source>
        <dbReference type="SAM" id="MobiDB-lite"/>
    </source>
</evidence>
<evidence type="ECO:0000269" key="7">
    <source>
    </source>
</evidence>
<evidence type="ECO:0000269" key="8">
    <source>
    </source>
</evidence>
<evidence type="ECO:0000303" key="9">
    <source>
    </source>
</evidence>
<evidence type="ECO:0000303" key="10">
    <source ref="2"/>
</evidence>
<evidence type="ECO:0000305" key="11"/>
<accession>O42477</accession>
<accession>Q6NWA4</accession>
<accession>Q7SXI5</accession>
<dbReference type="EMBL" id="U62898">
    <property type="protein sequence ID" value="AAB66714.1"/>
    <property type="status" value="ALT_FRAME"/>
    <property type="molecule type" value="mRNA"/>
</dbReference>
<dbReference type="EMBL" id="BC055588">
    <property type="protein sequence ID" value="AAH55588.1"/>
    <property type="molecule type" value="mRNA"/>
</dbReference>
<dbReference type="EMBL" id="BC067664">
    <property type="protein sequence ID" value="AAH67664.1"/>
    <property type="molecule type" value="mRNA"/>
</dbReference>
<dbReference type="SMR" id="O42477"/>
<dbReference type="FunCoup" id="O42477">
    <property type="interactions" value="654"/>
</dbReference>
<dbReference type="STRING" id="7955.ENSDARP00000038309"/>
<dbReference type="PaxDb" id="7955-ENSDARP00000038309"/>
<dbReference type="AGR" id="ZFIN:ZDB-GENE-001222-1"/>
<dbReference type="ZFIN" id="ZDB-GENE-001222-1">
    <property type="gene designation" value="vsx2"/>
</dbReference>
<dbReference type="eggNOG" id="KOG0494">
    <property type="taxonomic scope" value="Eukaryota"/>
</dbReference>
<dbReference type="InParanoid" id="O42477"/>
<dbReference type="PhylomeDB" id="O42477"/>
<dbReference type="PRO" id="PR:O42477"/>
<dbReference type="Proteomes" id="UP000000437">
    <property type="component" value="Unplaced"/>
</dbReference>
<dbReference type="GO" id="GO:0005634">
    <property type="term" value="C:nucleus"/>
    <property type="evidence" value="ECO:0000318"/>
    <property type="project" value="GO_Central"/>
</dbReference>
<dbReference type="GO" id="GO:0000981">
    <property type="term" value="F:DNA-binding transcription factor activity, RNA polymerase II-specific"/>
    <property type="evidence" value="ECO:0007669"/>
    <property type="project" value="InterPro"/>
</dbReference>
<dbReference type="GO" id="GO:0043565">
    <property type="term" value="F:sequence-specific DNA binding"/>
    <property type="evidence" value="ECO:0000314"/>
    <property type="project" value="ZFIN"/>
</dbReference>
<dbReference type="GO" id="GO:1990837">
    <property type="term" value="F:sequence-specific double-stranded DNA binding"/>
    <property type="evidence" value="ECO:0000318"/>
    <property type="project" value="GO_Central"/>
</dbReference>
<dbReference type="GO" id="GO:0000122">
    <property type="term" value="P:negative regulation of transcription by RNA polymerase II"/>
    <property type="evidence" value="ECO:0000314"/>
    <property type="project" value="ZFIN"/>
</dbReference>
<dbReference type="GO" id="GO:0061074">
    <property type="term" value="P:regulation of neural retina development"/>
    <property type="evidence" value="ECO:0000315"/>
    <property type="project" value="ZFIN"/>
</dbReference>
<dbReference type="GO" id="GO:0006357">
    <property type="term" value="P:regulation of transcription by RNA polymerase II"/>
    <property type="evidence" value="ECO:0000318"/>
    <property type="project" value="GO_Central"/>
</dbReference>
<dbReference type="GO" id="GO:0007601">
    <property type="term" value="P:visual perception"/>
    <property type="evidence" value="ECO:0007669"/>
    <property type="project" value="UniProtKB-KW"/>
</dbReference>
<dbReference type="CDD" id="cd00086">
    <property type="entry name" value="homeodomain"/>
    <property type="match status" value="1"/>
</dbReference>
<dbReference type="FunFam" id="1.10.10.60:FF:000065">
    <property type="entry name" value="Visual system homeobox 1"/>
    <property type="match status" value="1"/>
</dbReference>
<dbReference type="Gene3D" id="1.10.10.60">
    <property type="entry name" value="Homeodomain-like"/>
    <property type="match status" value="1"/>
</dbReference>
<dbReference type="InterPro" id="IPR023339">
    <property type="entry name" value="CVC"/>
</dbReference>
<dbReference type="InterPro" id="IPR001356">
    <property type="entry name" value="HD"/>
</dbReference>
<dbReference type="InterPro" id="IPR017970">
    <property type="entry name" value="Homeobox_CS"/>
</dbReference>
<dbReference type="InterPro" id="IPR009057">
    <property type="entry name" value="Homeodomain-like_sf"/>
</dbReference>
<dbReference type="InterPro" id="IPR003654">
    <property type="entry name" value="OAR_dom"/>
</dbReference>
<dbReference type="InterPro" id="IPR052294">
    <property type="entry name" value="VSX_homeobox_regulators"/>
</dbReference>
<dbReference type="PANTHER" id="PTHR46892">
    <property type="entry name" value="VISUAL SYSTEM HOMEOBOX 2"/>
    <property type="match status" value="1"/>
</dbReference>
<dbReference type="PANTHER" id="PTHR46892:SF3">
    <property type="entry name" value="VISUAL SYSTEM HOMEOBOX 2"/>
    <property type="match status" value="1"/>
</dbReference>
<dbReference type="Pfam" id="PF00046">
    <property type="entry name" value="Homeodomain"/>
    <property type="match status" value="1"/>
</dbReference>
<dbReference type="Pfam" id="PF03826">
    <property type="entry name" value="OAR"/>
    <property type="match status" value="1"/>
</dbReference>
<dbReference type="SMART" id="SM00389">
    <property type="entry name" value="HOX"/>
    <property type="match status" value="1"/>
</dbReference>
<dbReference type="SUPFAM" id="SSF46689">
    <property type="entry name" value="Homeodomain-like"/>
    <property type="match status" value="1"/>
</dbReference>
<dbReference type="PROSITE" id="PS51496">
    <property type="entry name" value="CVC"/>
    <property type="match status" value="1"/>
</dbReference>
<dbReference type="PROSITE" id="PS00027">
    <property type="entry name" value="HOMEOBOX_1"/>
    <property type="match status" value="1"/>
</dbReference>
<dbReference type="PROSITE" id="PS50071">
    <property type="entry name" value="HOMEOBOX_2"/>
    <property type="match status" value="1"/>
</dbReference>
<dbReference type="PROSITE" id="PS50803">
    <property type="entry name" value="OAR"/>
    <property type="match status" value="1"/>
</dbReference>
<gene>
    <name type="primary">vsx2</name>
    <name type="synonym">alx</name>
    <name type="synonym">chx10</name>
</gene>
<organism>
    <name type="scientific">Danio rerio</name>
    <name type="common">Zebrafish</name>
    <name type="synonym">Brachydanio rerio</name>
    <dbReference type="NCBI Taxonomy" id="7955"/>
    <lineage>
        <taxon>Eukaryota</taxon>
        <taxon>Metazoa</taxon>
        <taxon>Chordata</taxon>
        <taxon>Craniata</taxon>
        <taxon>Vertebrata</taxon>
        <taxon>Euteleostomi</taxon>
        <taxon>Actinopterygii</taxon>
        <taxon>Neopterygii</taxon>
        <taxon>Teleostei</taxon>
        <taxon>Ostariophysi</taxon>
        <taxon>Cypriniformes</taxon>
        <taxon>Danionidae</taxon>
        <taxon>Danioninae</taxon>
        <taxon>Danio</taxon>
    </lineage>
</organism>
<name>VSX2_DANRE</name>
<reference key="1">
    <citation type="journal article" date="1997" name="Mech. Dev.">
        <title>Inactivation of the zebrafish homologue of Chx10 by antisense oligonucleotides causes eye malformations similar to the ocular retardation phenotype.</title>
        <authorList>
            <person name="Barabino S.M."/>
            <person name="Spada F."/>
            <person name="Cotelli F."/>
            <person name="Boncinelli E."/>
        </authorList>
    </citation>
    <scope>NUCLEOTIDE SEQUENCE [MRNA] (ISOFORMS 1 AND 2)</scope>
    <scope>FUNCTION</scope>
    <scope>DEVELOPMENTAL STAGE</scope>
</reference>
<reference key="2">
    <citation type="submission" date="2004-03" db="EMBL/GenBank/DDBJ databases">
        <authorList>
            <consortium name="NIH - Zebrafish Gene Collection (ZGC) project"/>
        </authorList>
    </citation>
    <scope>NUCLEOTIDE SEQUENCE [LARGE SCALE MRNA] (ISOFORM 2)</scope>
    <source>
        <tissue>Embryo</tissue>
    </source>
</reference>
<reference key="3">
    <citation type="journal article" date="2008" name="Brain Res.">
        <title>Negative regulation of Vsx1 by its paralog Chx10/Vsx2 is conserved in the vertebrate retina.</title>
        <authorList>
            <person name="Clark A.M."/>
            <person name="Yun S."/>
            <person name="Veien E.S."/>
            <person name="Wu Y.Y."/>
            <person name="Chow R.L."/>
            <person name="Dorsky R.I."/>
            <person name="Levine E.M."/>
        </authorList>
    </citation>
    <scope>FUNCTION</scope>
    <scope>DISRUPTION PHENOTYPE</scope>
</reference>